<accession>O09046</accession>
<accession>Q1LZI6</accession>
<accession>Q3T9N9</accession>
<accession>Q3U7S6</accession>
<accession>Q3V0K2</accession>
<accession>Q6Y632</accession>
<accession>Q6YBV6</accession>
<accession>Q6YDI8</accession>
<accession>Q8R2G8</accession>
<accession>Q9CXK7</accession>
<feature type="signal peptide" evidence="3">
    <location>
        <begin position="1"/>
        <end position="21"/>
    </location>
</feature>
<feature type="chain" id="PRO_0000001711" description="L-amino-acid oxidase">
    <location>
        <begin position="22"/>
        <end position="630"/>
    </location>
</feature>
<feature type="region of interest" description="Disordered" evidence="4">
    <location>
        <begin position="532"/>
        <end position="554"/>
    </location>
</feature>
<feature type="binding site" evidence="1">
    <location>
        <begin position="68"/>
        <end position="69"/>
    </location>
    <ligand>
        <name>FAD</name>
        <dbReference type="ChEBI" id="CHEBI:57692"/>
    </ligand>
</feature>
<feature type="binding site" evidence="1">
    <location>
        <begin position="88"/>
        <end position="89"/>
    </location>
    <ligand>
        <name>FAD</name>
        <dbReference type="ChEBI" id="CHEBI:57692"/>
    </ligand>
</feature>
<feature type="binding site" evidence="1">
    <location>
        <position position="96"/>
    </location>
    <ligand>
        <name>FAD</name>
        <dbReference type="ChEBI" id="CHEBI:57692"/>
    </ligand>
</feature>
<feature type="binding site" evidence="1">
    <location>
        <begin position="112"/>
        <end position="115"/>
    </location>
    <ligand>
        <name>FAD</name>
        <dbReference type="ChEBI" id="CHEBI:57692"/>
    </ligand>
</feature>
<feature type="binding site" evidence="1">
    <location>
        <position position="115"/>
    </location>
    <ligand>
        <name>substrate</name>
    </ligand>
</feature>
<feature type="binding site" evidence="1">
    <location>
        <position position="286"/>
    </location>
    <ligand>
        <name>FAD</name>
        <dbReference type="ChEBI" id="CHEBI:57692"/>
    </ligand>
</feature>
<feature type="binding site" evidence="1">
    <location>
        <position position="395"/>
    </location>
    <ligand>
        <name>substrate</name>
    </ligand>
</feature>
<feature type="binding site" evidence="1">
    <location>
        <position position="479"/>
    </location>
    <ligand>
        <name>FAD</name>
        <dbReference type="ChEBI" id="CHEBI:57692"/>
    </ligand>
</feature>
<feature type="binding site" evidence="1">
    <location>
        <begin position="486"/>
        <end position="491"/>
    </location>
    <ligand>
        <name>FAD</name>
        <dbReference type="ChEBI" id="CHEBI:57692"/>
    </ligand>
</feature>
<feature type="binding site" evidence="1">
    <location>
        <begin position="486"/>
        <end position="487"/>
    </location>
    <ligand>
        <name>substrate</name>
    </ligand>
</feature>
<feature type="glycosylation site" description="N-linked (GlcNAc...) asparagine" evidence="3">
    <location>
        <position position="53"/>
    </location>
</feature>
<feature type="glycosylation site" description="N-linked (GlcNAc...) asparagine" evidence="3">
    <location>
        <position position="133"/>
    </location>
</feature>
<feature type="glycosylation site" description="N-linked (GlcNAc...) asparagine" evidence="3">
    <location>
        <position position="219"/>
    </location>
</feature>
<feature type="disulfide bond" evidence="1">
    <location>
        <begin position="35"/>
        <end position="198"/>
    </location>
</feature>
<feature type="splice variant" id="VSP_017174" description="In isoform 2." evidence="15">
    <original>MAGLA</original>
    <variation>MGARRAPQRPPCT</variation>
    <location>
        <begin position="1"/>
        <end position="5"/>
    </location>
</feature>
<feature type="sequence conflict" description="In Ref. 2; AAO17038/AAO17039." evidence="19" ref="2">
    <original>A</original>
    <variation>V</variation>
    <location>
        <position position="12"/>
    </location>
</feature>
<feature type="sequence conflict" description="In Ref. 2; AAO65453/AAS00457." evidence="19" ref="2">
    <original>S</original>
    <variation>L</variation>
    <location>
        <position position="56"/>
    </location>
</feature>
<feature type="sequence conflict" description="In Ref. 3; BAE30174/BAE31293." evidence="19" ref="3">
    <original>M</original>
    <variation>V</variation>
    <location>
        <position position="184"/>
    </location>
</feature>
<feature type="sequence conflict" description="In Ref. 2; AAO23118 and 3; BAE21502/BAE29676/BAE30047/BAE30174/BAE31293." evidence="19" ref="2 3">
    <original>R</original>
    <variation>Q</variation>
    <location>
        <position position="385"/>
    </location>
</feature>
<feature type="sequence conflict" description="In Ref. 3; BAE21502." evidence="19" ref="3">
    <original>Q</original>
    <variation>R</variation>
    <location>
        <position position="454"/>
    </location>
</feature>
<feature type="sequence conflict" description="In Ref. 3; BAE21502." evidence="19" ref="3">
    <original>E</original>
    <variation>Q</variation>
    <location>
        <position position="537"/>
    </location>
</feature>
<feature type="sequence conflict" description="In Ref. 2; AAO17038/AAO17039." evidence="19" ref="2">
    <original>P</original>
    <variation>L</variation>
    <location>
        <position position="551"/>
    </location>
</feature>
<feature type="sequence conflict" description="In Ref. 2; AAO17038/AAO17039." evidence="19" ref="2">
    <original>A</original>
    <variation>M</variation>
    <location>
        <position position="568"/>
    </location>
</feature>
<feature type="sequence conflict" description="In Ref. 3; BAB29253." evidence="19" ref="3">
    <original>PSEHVQVHGEVIPEWHGHGGSGTPQMHRVGDHS</original>
    <variation>LRSMYRCMGKSSLSGMVMGDLAPRKCTEWGTTPNRKEEVSTQLLSQPSSGQTDHLH</variation>
    <location>
        <begin position="598"/>
        <end position="630"/>
    </location>
</feature>
<comment type="function">
    <text evidence="2 5 7 8 9 10 11 12">Secreted L-amino-acid oxidase that acts as a key immunoregulator (PubMed:32818467). Has preference for L-aromatic amino acids: converts phenylalanine (Phe), tyrosine (Tyr) and tryptophan (Trp) to phenylpyruvic acid (PP), hydroxyphenylpyruvic acid (HPP), and indole-3-pyruvic acid (I3P), respectively (PubMed:15383589). Also has weak L-arginine oxidase activity (By similarity). Acts as a negative regulator of anti-tumor immunity by mediating Trp degradation via an indole pyruvate pathway that activates the transcription factor AHR (PubMed:21469114, PubMed:28405502, PubMed:32818467). IL4I1-mediated Trp catabolism generates I3P, giving rise to indole metabolites (indole-3-acetic acid (IAA) and indole-3-aldehyde (I3A)) and kynurenic acid, which act as ligands for AHR, a ligand-activated transcription factor that plays important roles in immunity and cancer (By similarity). AHR activation by indoles following IL4I1-mediated Trp degradation enhances tumor progression by promoting cancer cell motility and suppressing adaptive immunity (PubMed:32818467). Also has an immunoregulatory function in some immune cell, probably by mediating Trp degradation and promoting downstream AHR activation: inhibits T-cell activation and proliferation, promotes the differentiation of naive CD4(+) T-cells into FOXP3(+) regulatory T-cells (Treg) and regulates the development and function of B-cells (PubMed:25778793, PubMed:29288206). Also regulates M2 macrophage polarization by inhibiting T-cell activation (PubMed:26599209). Also has antibacterial properties by inhibiting growth of Gram negative and Gram positive bacteria through the production of NH4(+) and H2O2 (By similarity).</text>
</comment>
<comment type="catalytic activity">
    <reaction evidence="5">
        <text>an L-alpha-amino acid + O2 + H2O = a 2-oxocarboxylate + H2O2 + NH4(+)</text>
        <dbReference type="Rhea" id="RHEA:13781"/>
        <dbReference type="ChEBI" id="CHEBI:15377"/>
        <dbReference type="ChEBI" id="CHEBI:15379"/>
        <dbReference type="ChEBI" id="CHEBI:16240"/>
        <dbReference type="ChEBI" id="CHEBI:28938"/>
        <dbReference type="ChEBI" id="CHEBI:35179"/>
        <dbReference type="ChEBI" id="CHEBI:59869"/>
        <dbReference type="EC" id="1.4.3.2"/>
    </reaction>
    <physiologicalReaction direction="left-to-right" evidence="5">
        <dbReference type="Rhea" id="RHEA:13782"/>
    </physiologicalReaction>
</comment>
<comment type="catalytic activity">
    <reaction evidence="2">
        <text>L-tryptophan + O2 + H2O = indole-3-pyruvate + H2O2 + NH4(+)</text>
        <dbReference type="Rhea" id="RHEA:61244"/>
        <dbReference type="ChEBI" id="CHEBI:15377"/>
        <dbReference type="ChEBI" id="CHEBI:15379"/>
        <dbReference type="ChEBI" id="CHEBI:16240"/>
        <dbReference type="ChEBI" id="CHEBI:17640"/>
        <dbReference type="ChEBI" id="CHEBI:28938"/>
        <dbReference type="ChEBI" id="CHEBI:57912"/>
    </reaction>
    <physiologicalReaction direction="left-to-right" evidence="2">
        <dbReference type="Rhea" id="RHEA:61245"/>
    </physiologicalReaction>
</comment>
<comment type="catalytic activity">
    <reaction evidence="5">
        <text>L-phenylalanine + O2 + H2O = 3-phenylpyruvate + H2O2 + NH4(+)</text>
        <dbReference type="Rhea" id="RHEA:61240"/>
        <dbReference type="ChEBI" id="CHEBI:15377"/>
        <dbReference type="ChEBI" id="CHEBI:15379"/>
        <dbReference type="ChEBI" id="CHEBI:16240"/>
        <dbReference type="ChEBI" id="CHEBI:18005"/>
        <dbReference type="ChEBI" id="CHEBI:28938"/>
        <dbReference type="ChEBI" id="CHEBI:58095"/>
    </reaction>
    <physiologicalReaction direction="left-to-right" evidence="5">
        <dbReference type="Rhea" id="RHEA:61241"/>
    </physiologicalReaction>
</comment>
<comment type="catalytic activity">
    <reaction evidence="2">
        <text>L-tyrosine + O2 + H2O = 3-(4-hydroxyphenyl)pyruvate + H2O2 + NH4(+)</text>
        <dbReference type="Rhea" id="RHEA:61248"/>
        <dbReference type="ChEBI" id="CHEBI:15377"/>
        <dbReference type="ChEBI" id="CHEBI:15379"/>
        <dbReference type="ChEBI" id="CHEBI:16240"/>
        <dbReference type="ChEBI" id="CHEBI:28938"/>
        <dbReference type="ChEBI" id="CHEBI:36242"/>
        <dbReference type="ChEBI" id="CHEBI:58315"/>
    </reaction>
    <physiologicalReaction direction="left-to-right" evidence="2">
        <dbReference type="Rhea" id="RHEA:61249"/>
    </physiologicalReaction>
</comment>
<comment type="catalytic activity">
    <reaction evidence="2">
        <text>L-arginine + O2 + H2O = 5-guanidino-2-oxopentanoate + H2O2 + NH4(+)</text>
        <dbReference type="Rhea" id="RHEA:51404"/>
        <dbReference type="ChEBI" id="CHEBI:15377"/>
        <dbReference type="ChEBI" id="CHEBI:15379"/>
        <dbReference type="ChEBI" id="CHEBI:16240"/>
        <dbReference type="ChEBI" id="CHEBI:28938"/>
        <dbReference type="ChEBI" id="CHEBI:32682"/>
        <dbReference type="ChEBI" id="CHEBI:58489"/>
        <dbReference type="EC" id="1.4.3.25"/>
    </reaction>
    <physiologicalReaction direction="left-to-right" evidence="2">
        <dbReference type="Rhea" id="RHEA:51405"/>
    </physiologicalReaction>
</comment>
<comment type="cofactor">
    <cofactor evidence="5">
        <name>FAD</name>
        <dbReference type="ChEBI" id="CHEBI:57692"/>
    </cofactor>
</comment>
<comment type="biophysicochemical properties">
    <kinetics>
        <KM evidence="5">6.5 mM for phenylalanine (at 37 degrees Celsius)</KM>
        <Vmax evidence="5">0.0099 nmol/min/mg enzyme toward phenylalanine (at 37 degrees Celsius)</Vmax>
    </kinetics>
    <phDependence>
        <text evidence="5">Optimum pH is 4.0.</text>
    </phDependence>
</comment>
<comment type="pathway">
    <text evidence="2">Amino-acid degradation; L-tryptophan degradation via pyruvate pathway.</text>
</comment>
<comment type="subcellular location">
    <subcellularLocation>
        <location evidence="2">Secreted</location>
    </subcellularLocation>
    <subcellularLocation>
        <location evidence="2">Cytoplasmic vesicle</location>
        <location evidence="2">Secretory vesicle</location>
        <location evidence="2">Acrosome</location>
    </subcellularLocation>
    <text evidence="2">Secreted at the immunological synapse.</text>
</comment>
<comment type="subcellular location">
    <molecule>Isoform 1</molecule>
    <subcellularLocation>
        <location evidence="5">Lysosome</location>
    </subcellularLocation>
</comment>
<comment type="subcellular location">
    <molecule>Isoform 2</molecule>
    <subcellularLocation>
        <location evidence="5">Lysosome</location>
    </subcellularLocation>
</comment>
<comment type="alternative products">
    <event type="alternative promoter"/>
    <isoform>
        <id>O09046-1</id>
        <name>1</name>
        <sequence type="displayed"/>
    </isoform>
    <isoform>
        <id>O09046-2</id>
        <name>2</name>
        <name evidence="14">IL4I1_2</name>
        <sequence type="described" ref="VSP_017174"/>
    </isoform>
</comment>
<comment type="tissue specificity">
    <text evidence="6 13">Primarily found in immune tissues.</text>
</comment>
<comment type="tissue specificity">
    <molecule>Isoform 1</molecule>
    <text evidence="6">Primarily found in immune tissues, mostly in B-lymphocytes.</text>
</comment>
<comment type="tissue specificity">
    <molecule>Isoform 2</molecule>
    <text evidence="6">Restricted to the testis, predominantly in Sertoli cells at the periphery of the ducts, and the brain, including Purkinje cells, hippocampus and mitral cells in the olfactory bulb. No isoform 2 expression in fetal tissues.</text>
</comment>
<comment type="developmental stage">
    <text evidence="9">Expression increases during bone marrow-derived macrophage (BMDM) differentiation: expression is much higher in primary macrophages than monocytes.</text>
</comment>
<comment type="induction">
    <text evidence="13">By interleukin-4.</text>
</comment>
<comment type="disruption phenotype">
    <text evidence="11">Mice display an accelerated B-cell egress from the bone marrow, resulting in the accumulation of peripheral follicular B-cells.</text>
</comment>
<comment type="miscellaneous">
    <molecule>Isoform 2</molecule>
    <text evidence="20">Uses the promoter of the upstream NUP62 gene and shares the first 2 non-coding exons with NUP62.</text>
</comment>
<comment type="similarity">
    <text evidence="19">Belongs to the flavin monoamine oxidase family. FIG1 subfamily.</text>
</comment>
<comment type="sequence caution" evidence="19">
    <conflict type="erroneous initiation">
        <sequence resource="EMBL-CDS" id="BAB29253"/>
    </conflict>
</comment>
<keyword id="KW-1064">Adaptive immunity</keyword>
<keyword id="KW-0877">Alternative promoter usage</keyword>
<keyword id="KW-0968">Cytoplasmic vesicle</keyword>
<keyword id="KW-1015">Disulfide bond</keyword>
<keyword id="KW-0274">FAD</keyword>
<keyword id="KW-0285">Flavoprotein</keyword>
<keyword id="KW-0325">Glycoprotein</keyword>
<keyword id="KW-0391">Immunity</keyword>
<keyword id="KW-0458">Lysosome</keyword>
<keyword id="KW-0560">Oxidoreductase</keyword>
<keyword id="KW-1185">Reference proteome</keyword>
<keyword id="KW-0964">Secreted</keyword>
<keyword id="KW-0732">Signal</keyword>
<reference key="1">
    <citation type="journal article" date="1997" name="Proc. Natl. Acad. Sci. U.S.A.">
        <title>Fig1, an interleukin 4-induced mouse B cell gene isolated by cDNA representational difference analysis.</title>
        <authorList>
            <person name="Chu C.C."/>
            <person name="Paul W.E."/>
        </authorList>
    </citation>
    <scope>NUCLEOTIDE SEQUENCE [GENOMIC DNA / MRNA] (ISOFORM 1)</scope>
    <scope>TISSUE SPECIFICITY</scope>
    <scope>INDUCTION</scope>
    <source>
        <strain>BALB/cJ</strain>
        <strain>CBA/J</strain>
    </source>
</reference>
<reference key="2">
    <citation type="submission" date="2003-11" db="EMBL/GenBank/DDBJ databases">
        <title>Interleukin-four induced gene-1 polymorphisms correlate with Sle3 autoimmune susceptibility.</title>
        <authorList>
            <person name="Chu C.C."/>
            <person name="Kim J.A."/>
            <person name="Gupta N."/>
            <person name="Yuen G.J."/>
            <person name="Thomas R.R."/>
            <person name="George J."/>
            <person name="Hsueh K."/>
        </authorList>
    </citation>
    <scope>NUCLEOTIDE SEQUENCE [GENOMIC DNA / MRNA] (ISOFORM 1)</scope>
    <source>
        <strain>CBA/J</strain>
        <strain>MRL/MpJ</strain>
        <strain>NZW/LacJ</strain>
    </source>
</reference>
<reference key="3">
    <citation type="journal article" date="2005" name="Science">
        <title>The transcriptional landscape of the mammalian genome.</title>
        <authorList>
            <person name="Carninci P."/>
            <person name="Kasukawa T."/>
            <person name="Katayama S."/>
            <person name="Gough J."/>
            <person name="Frith M.C."/>
            <person name="Maeda N."/>
            <person name="Oyama R."/>
            <person name="Ravasi T."/>
            <person name="Lenhard B."/>
            <person name="Wells C."/>
            <person name="Kodzius R."/>
            <person name="Shimokawa K."/>
            <person name="Bajic V.B."/>
            <person name="Brenner S.E."/>
            <person name="Batalov S."/>
            <person name="Forrest A.R."/>
            <person name="Zavolan M."/>
            <person name="Davis M.J."/>
            <person name="Wilming L.G."/>
            <person name="Aidinis V."/>
            <person name="Allen J.E."/>
            <person name="Ambesi-Impiombato A."/>
            <person name="Apweiler R."/>
            <person name="Aturaliya R.N."/>
            <person name="Bailey T.L."/>
            <person name="Bansal M."/>
            <person name="Baxter L."/>
            <person name="Beisel K.W."/>
            <person name="Bersano T."/>
            <person name="Bono H."/>
            <person name="Chalk A.M."/>
            <person name="Chiu K.P."/>
            <person name="Choudhary V."/>
            <person name="Christoffels A."/>
            <person name="Clutterbuck D.R."/>
            <person name="Crowe M.L."/>
            <person name="Dalla E."/>
            <person name="Dalrymple B.P."/>
            <person name="de Bono B."/>
            <person name="Della Gatta G."/>
            <person name="di Bernardo D."/>
            <person name="Down T."/>
            <person name="Engstrom P."/>
            <person name="Fagiolini M."/>
            <person name="Faulkner G."/>
            <person name="Fletcher C.F."/>
            <person name="Fukushima T."/>
            <person name="Furuno M."/>
            <person name="Futaki S."/>
            <person name="Gariboldi M."/>
            <person name="Georgii-Hemming P."/>
            <person name="Gingeras T.R."/>
            <person name="Gojobori T."/>
            <person name="Green R.E."/>
            <person name="Gustincich S."/>
            <person name="Harbers M."/>
            <person name="Hayashi Y."/>
            <person name="Hensch T.K."/>
            <person name="Hirokawa N."/>
            <person name="Hill D."/>
            <person name="Huminiecki L."/>
            <person name="Iacono M."/>
            <person name="Ikeo K."/>
            <person name="Iwama A."/>
            <person name="Ishikawa T."/>
            <person name="Jakt M."/>
            <person name="Kanapin A."/>
            <person name="Katoh M."/>
            <person name="Kawasawa Y."/>
            <person name="Kelso J."/>
            <person name="Kitamura H."/>
            <person name="Kitano H."/>
            <person name="Kollias G."/>
            <person name="Krishnan S.P."/>
            <person name="Kruger A."/>
            <person name="Kummerfeld S.K."/>
            <person name="Kurochkin I.V."/>
            <person name="Lareau L.F."/>
            <person name="Lazarevic D."/>
            <person name="Lipovich L."/>
            <person name="Liu J."/>
            <person name="Liuni S."/>
            <person name="McWilliam S."/>
            <person name="Madan Babu M."/>
            <person name="Madera M."/>
            <person name="Marchionni L."/>
            <person name="Matsuda H."/>
            <person name="Matsuzawa S."/>
            <person name="Miki H."/>
            <person name="Mignone F."/>
            <person name="Miyake S."/>
            <person name="Morris K."/>
            <person name="Mottagui-Tabar S."/>
            <person name="Mulder N."/>
            <person name="Nakano N."/>
            <person name="Nakauchi H."/>
            <person name="Ng P."/>
            <person name="Nilsson R."/>
            <person name="Nishiguchi S."/>
            <person name="Nishikawa S."/>
            <person name="Nori F."/>
            <person name="Ohara O."/>
            <person name="Okazaki Y."/>
            <person name="Orlando V."/>
            <person name="Pang K.C."/>
            <person name="Pavan W.J."/>
            <person name="Pavesi G."/>
            <person name="Pesole G."/>
            <person name="Petrovsky N."/>
            <person name="Piazza S."/>
            <person name="Reed J."/>
            <person name="Reid J.F."/>
            <person name="Ring B.Z."/>
            <person name="Ringwald M."/>
            <person name="Rost B."/>
            <person name="Ruan Y."/>
            <person name="Salzberg S.L."/>
            <person name="Sandelin A."/>
            <person name="Schneider C."/>
            <person name="Schoenbach C."/>
            <person name="Sekiguchi K."/>
            <person name="Semple C.A."/>
            <person name="Seno S."/>
            <person name="Sessa L."/>
            <person name="Sheng Y."/>
            <person name="Shibata Y."/>
            <person name="Shimada H."/>
            <person name="Shimada K."/>
            <person name="Silva D."/>
            <person name="Sinclair B."/>
            <person name="Sperling S."/>
            <person name="Stupka E."/>
            <person name="Sugiura K."/>
            <person name="Sultana R."/>
            <person name="Takenaka Y."/>
            <person name="Taki K."/>
            <person name="Tammoja K."/>
            <person name="Tan S.L."/>
            <person name="Tang S."/>
            <person name="Taylor M.S."/>
            <person name="Tegner J."/>
            <person name="Teichmann S.A."/>
            <person name="Ueda H.R."/>
            <person name="van Nimwegen E."/>
            <person name="Verardo R."/>
            <person name="Wei C.L."/>
            <person name="Yagi K."/>
            <person name="Yamanishi H."/>
            <person name="Zabarovsky E."/>
            <person name="Zhu S."/>
            <person name="Zimmer A."/>
            <person name="Hide W."/>
            <person name="Bult C."/>
            <person name="Grimmond S.M."/>
            <person name="Teasdale R.D."/>
            <person name="Liu E.T."/>
            <person name="Brusic V."/>
            <person name="Quackenbush J."/>
            <person name="Wahlestedt C."/>
            <person name="Mattick J.S."/>
            <person name="Hume D.A."/>
            <person name="Kai C."/>
            <person name="Sasaki D."/>
            <person name="Tomaru Y."/>
            <person name="Fukuda S."/>
            <person name="Kanamori-Katayama M."/>
            <person name="Suzuki M."/>
            <person name="Aoki J."/>
            <person name="Arakawa T."/>
            <person name="Iida J."/>
            <person name="Imamura K."/>
            <person name="Itoh M."/>
            <person name="Kato T."/>
            <person name="Kawaji H."/>
            <person name="Kawagashira N."/>
            <person name="Kawashima T."/>
            <person name="Kojima M."/>
            <person name="Kondo S."/>
            <person name="Konno H."/>
            <person name="Nakano K."/>
            <person name="Ninomiya N."/>
            <person name="Nishio T."/>
            <person name="Okada M."/>
            <person name="Plessy C."/>
            <person name="Shibata K."/>
            <person name="Shiraki T."/>
            <person name="Suzuki S."/>
            <person name="Tagami M."/>
            <person name="Waki K."/>
            <person name="Watahiki A."/>
            <person name="Okamura-Oho Y."/>
            <person name="Suzuki H."/>
            <person name="Kawai J."/>
            <person name="Hayashizaki Y."/>
        </authorList>
    </citation>
    <scope>NUCLEOTIDE SEQUENCE [LARGE SCALE MRNA] (ISOFORMS 1 AND 2)</scope>
    <source>
        <strain>C57BL/6J</strain>
        <strain>NOD</strain>
        <tissue>Bone marrow</tissue>
        <tissue>Embryonic head</tissue>
        <tissue>Spleen</tissue>
        <tissue>Testis</tissue>
    </source>
</reference>
<reference key="4">
    <citation type="journal article" date="2004" name="Genome Res.">
        <title>The status, quality, and expansion of the NIH full-length cDNA project: the Mammalian Gene Collection (MGC).</title>
        <authorList>
            <consortium name="The MGC Project Team"/>
        </authorList>
    </citation>
    <scope>NUCLEOTIDE SEQUENCE [LARGE SCALE MRNA] (ISOFORM 1)</scope>
</reference>
<reference key="5">
    <citation type="journal article" date="1998" name="Mol. Immunol.">
        <title>Expressed genes in interleukin-4 treated B cells identified by cDNA representational difference analysis.</title>
        <authorList>
            <person name="Chu C.C."/>
            <person name="Paul W.E."/>
        </authorList>
    </citation>
    <scope>NUCLEOTIDE SEQUENCE [MRNA] OF 122-289</scope>
    <source>
        <strain>BALB/cJ</strain>
        <tissue>Spleen</tissue>
    </source>
</reference>
<reference key="6">
    <citation type="journal article" date="2004" name="J. Immunol.">
        <title>IL-4-induced gene-1 is a leukocyte L-amino acid oxidase with an unusual acidic pH preference and lysosomal localization.</title>
        <authorList>
            <person name="Mason J.M."/>
            <person name="Naidu M.D."/>
            <person name="Barcia M."/>
            <person name="Porti D."/>
            <person name="Chavan S.S."/>
            <person name="Chu C.C."/>
        </authorList>
    </citation>
    <scope>FUNCTION</scope>
    <scope>CATALYTIC ACTIVITY</scope>
    <scope>BIOPHYSICOCHEMICAL PROPERTIES</scope>
    <scope>COFACTOR</scope>
    <scope>GLYCOSYLATION</scope>
    <scope>SUBCELLULAR LOCATION</scope>
</reference>
<reference key="7">
    <citation type="journal article" date="2005" name="BMC Biol.">
        <title>Alternative pre-mRNA processing regulates cell-type specific expression of the IL4l1 and NUP62 genes.</title>
        <authorList>
            <person name="Wiemann S."/>
            <person name="Kolb-Kokocinski A."/>
            <person name="Poustka A."/>
        </authorList>
    </citation>
    <scope>ALTERNATIVE PROMOTER USAGE</scope>
    <scope>TISSUE SPECIFICITY</scope>
</reference>
<reference key="8">
    <citation type="journal article" date="2010" name="Cell">
        <title>A tissue-specific atlas of mouse protein phosphorylation and expression.</title>
        <authorList>
            <person name="Huttlin E.L."/>
            <person name="Jedrychowski M.P."/>
            <person name="Elias J.E."/>
            <person name="Goswami T."/>
            <person name="Rad R."/>
            <person name="Beausoleil S.A."/>
            <person name="Villen J."/>
            <person name="Haas W."/>
            <person name="Sowa M.E."/>
            <person name="Gygi S.P."/>
        </authorList>
    </citation>
    <scope>IDENTIFICATION BY MASS SPECTROMETRY [LARGE SCALE ANALYSIS]</scope>
    <source>
        <tissue>Spleen</tissue>
        <tissue>Testis</tissue>
    </source>
</reference>
<reference key="9">
    <citation type="journal article" date="2011" name="Eur. J. Immunol.">
        <title>IL4I1: an inhibitor of the CD8(+) antitumor T-cell response in vivo.</title>
        <authorList>
            <person name="Lasoudris F."/>
            <person name="Cousin C."/>
            <person name="Prevost-Blondel A."/>
            <person name="Martin-Garcia N."/>
            <person name="Abd-Alsamad I."/>
            <person name="Ortonne N."/>
            <person name="Farcet J.P."/>
            <person name="Castellano F."/>
            <person name="Molinier-Frenkel V."/>
        </authorList>
    </citation>
    <scope>FUNCTION</scope>
</reference>
<reference key="10">
    <citation type="journal article" date="2015" name="Eur. J. Immunol.">
        <title>The immunosuppressive enzyme IL4I1 promotes FoxP3(+) regulatory T lymphocyte differentiation.</title>
        <authorList>
            <person name="Cousin C."/>
            <person name="Aubatin A."/>
            <person name="Le Gouvello S."/>
            <person name="Apetoh L."/>
            <person name="Castellano F."/>
            <person name="Molinier-Frenkel V."/>
        </authorList>
    </citation>
    <scope>FUNCTION</scope>
</reference>
<reference key="11">
    <citation type="journal article" date="2015" name="PLoS ONE">
        <title>IL4I1 is a novel regulator of M2 macrophage polarization that can inhibit T Cell activation via L-tryptophan and arginine depletion and IL-10 production.</title>
        <authorList>
            <person name="Yue Y."/>
            <person name="Huang W."/>
            <person name="Liang J."/>
            <person name="Guo J."/>
            <person name="Ji J."/>
            <person name="Yao Y."/>
            <person name="Zheng M."/>
            <person name="Cai Z."/>
            <person name="Lu L."/>
            <person name="Wang J."/>
        </authorList>
    </citation>
    <scope>FUNCTION</scope>
    <scope>DEVELOPMENTAL STAGE</scope>
</reference>
<reference key="12">
    <citation type="journal article" date="2017" name="OncoImmunology">
        <title>IL4-induced gene 1 promotes tumor growth by shaping the immune microenvironment in melanoma.</title>
        <authorList>
            <person name="Bod L."/>
            <person name="Lengagne R."/>
            <person name="Wrobel L."/>
            <person name="Ramspott J.P."/>
            <person name="Kato M."/>
            <person name="Avril M.F."/>
            <person name="Castellano F."/>
            <person name="Molinier-Frenkel V."/>
            <person name="Prevost-Blondel A."/>
        </authorList>
    </citation>
    <scope>FUNCTION</scope>
</reference>
<reference key="13">
    <citation type="journal article" date="2018" name="J. Immunol.">
        <title>IL-4-induced gene 1: a negative immune checkpoint controlling B cell differentiation and activation.</title>
        <authorList>
            <person name="Bod L."/>
            <person name="Douguet L."/>
            <person name="Auffray C."/>
            <person name="Lengagne R."/>
            <person name="Bekkat F."/>
            <person name="Rondeau E."/>
            <person name="Molinier-Frenkel V."/>
            <person name="Castellano F."/>
            <person name="Richard Y."/>
            <person name="Prevost-Blondel A."/>
        </authorList>
    </citation>
    <scope>FUNCTION</scope>
    <scope>DISRUPTION PHENOTYPE</scope>
</reference>
<reference key="14">
    <citation type="journal article" date="2020" name="Cell">
        <title>IL4I1 is a metabolic immune checkpoint that activates the AHR and promotes tumor progression.</title>
        <authorList>
            <person name="Sadik A."/>
            <person name="Somarribas Patterson L.F."/>
            <person name="Oeztuerk S."/>
            <person name="Mohapatra S.R."/>
            <person name="Panitz V."/>
            <person name="Secker P.F."/>
            <person name="Pfaender P."/>
            <person name="Loth S."/>
            <person name="Salem H."/>
            <person name="Prentzell M.T."/>
            <person name="Berdel B."/>
            <person name="Iskar M."/>
            <person name="Faessler E."/>
            <person name="Reuter F."/>
            <person name="Kirst I."/>
            <person name="Kalter V."/>
            <person name="Foerster K.I."/>
            <person name="Jaeger E."/>
            <person name="Guevara C.R."/>
            <person name="Sobeh M."/>
            <person name="Hielscher T."/>
            <person name="Poschet G."/>
            <person name="Reinhardt A."/>
            <person name="Hassel J.C."/>
            <person name="Zapatka M."/>
            <person name="Hahn U."/>
            <person name="von Deimling A."/>
            <person name="Hopf C."/>
            <person name="Schlichting R."/>
            <person name="Escher B.I."/>
            <person name="Burhenne J."/>
            <person name="Haefeli W.E."/>
            <person name="Ishaque N."/>
            <person name="Boehme A."/>
            <person name="Schaeuble S."/>
            <person name="Thedieck K."/>
            <person name="Trump S."/>
            <person name="Seiffert M."/>
            <person name="Opitz C.A."/>
        </authorList>
    </citation>
    <scope>FUNCTION</scope>
</reference>
<evidence type="ECO:0000250" key="1">
    <source>
        <dbReference type="UniProtKB" id="P81382"/>
    </source>
</evidence>
<evidence type="ECO:0000250" key="2">
    <source>
        <dbReference type="UniProtKB" id="Q96RQ9"/>
    </source>
</evidence>
<evidence type="ECO:0000255" key="3"/>
<evidence type="ECO:0000256" key="4">
    <source>
        <dbReference type="SAM" id="MobiDB-lite"/>
    </source>
</evidence>
<evidence type="ECO:0000269" key="5">
    <source>
    </source>
</evidence>
<evidence type="ECO:0000269" key="6">
    <source>
    </source>
</evidence>
<evidence type="ECO:0000269" key="7">
    <source>
    </source>
</evidence>
<evidence type="ECO:0000269" key="8">
    <source>
    </source>
</evidence>
<evidence type="ECO:0000269" key="9">
    <source>
    </source>
</evidence>
<evidence type="ECO:0000269" key="10">
    <source>
    </source>
</evidence>
<evidence type="ECO:0000269" key="11">
    <source>
    </source>
</evidence>
<evidence type="ECO:0000269" key="12">
    <source>
    </source>
</evidence>
<evidence type="ECO:0000269" key="13">
    <source>
    </source>
</evidence>
<evidence type="ECO:0000303" key="14">
    <source>
    </source>
</evidence>
<evidence type="ECO:0000303" key="15">
    <source>
    </source>
</evidence>
<evidence type="ECO:0000303" key="16">
    <source>
    </source>
</evidence>
<evidence type="ECO:0000303" key="17">
    <source>
    </source>
</evidence>
<evidence type="ECO:0000303" key="18">
    <source ref="2"/>
</evidence>
<evidence type="ECO:0000305" key="19"/>
<evidence type="ECO:0000305" key="20">
    <source>
    </source>
</evidence>
<evidence type="ECO:0000312" key="21">
    <source>
        <dbReference type="MGI" id="MGI:109552"/>
    </source>
</evidence>
<name>OXLA_MOUSE</name>
<gene>
    <name evidence="18 21" type="primary">Il4i1</name>
    <name evidence="17" type="synonym">Fig1</name>
</gene>
<proteinExistence type="evidence at protein level"/>
<protein>
    <recommendedName>
        <fullName evidence="19">L-amino-acid oxidase</fullName>
        <shortName evidence="19">LAAO</shortName>
        <shortName evidence="19">LAO</shortName>
        <ecNumber evidence="5">1.4.3.2</ecNumber>
        <ecNumber evidence="2">1.4.3.25</ecNumber>
    </recommendedName>
    <alternativeName>
        <fullName evidence="18">Interleukin-4-induced protein 1</fullName>
        <shortName evidence="18">IL4-induced protein 1</shortName>
        <shortName evidence="16">mIL4I1</shortName>
    </alternativeName>
    <alternativeName>
        <fullName evidence="17">Protein Fig-1</fullName>
        <shortName evidence="17">mFIG1</shortName>
    </alternativeName>
</protein>
<organism>
    <name type="scientific">Mus musculus</name>
    <name type="common">Mouse</name>
    <dbReference type="NCBI Taxonomy" id="10090"/>
    <lineage>
        <taxon>Eukaryota</taxon>
        <taxon>Metazoa</taxon>
        <taxon>Chordata</taxon>
        <taxon>Craniata</taxon>
        <taxon>Vertebrata</taxon>
        <taxon>Euteleostomi</taxon>
        <taxon>Mammalia</taxon>
        <taxon>Eutheria</taxon>
        <taxon>Euarchontoglires</taxon>
        <taxon>Glires</taxon>
        <taxon>Rodentia</taxon>
        <taxon>Myomorpha</taxon>
        <taxon>Muroidea</taxon>
        <taxon>Muridae</taxon>
        <taxon>Murinae</taxon>
        <taxon>Mus</taxon>
        <taxon>Mus</taxon>
    </lineage>
</organism>
<sequence length="630" mass="70191">MAGLALRLVLAATLLGLAGSLDWKAASSLNPIEKCMEDHDYEQLLKVVTLGLNRTSKPQKVVVVGAGVAGLVAAKMLSDAGHKVTILEADNRIGGRIFTFRDEKTGWIGELGAMRMPSSHRILHKLCRTLGLNLTQFTQYDENTWTEVHNVKLRNYVVEKMPEKLGYNLNNRERGHSPEDIYQMALNKAFKDLKALGCKKAMNKFNKHTLLEYLLEEGNLSRPAVQLLGDVMSEEGFFYLSFAEALRAHACLSDRLRYSRIVGGWDLLPRALLSSLSGALLLNAPVVSITQGRNDVRVHIATSLHSEKTLTADVVLLTASGPALQRITFSPPLTRKRQEALRALHYVAASKVFLSFRRPFWHEEHIEGGHSNTDRPSRLIFYPARGEGSLLLASYTWSDAAAPFAGLSTDQTLRLVLQDVAALHGPVVFRLWDGRGVVKRWAEDPHSQGGFVVQPPLYGREAEDYDWSAPFGRIYFAGEHTALPHGWVETAVKSGLRAAVRINNNYGYGEVDPQMMEHAYAEANYLDQYPEGERPEEQQAREEVSPDEQEPSHKHLLVETSPEGQQHAFVEAIPELQGHVFVETVPQEKGHAHQNIYPSEHVQVHGEVIPEWHGHGGSGTPQMHRVGDHS</sequence>
<dbReference type="EC" id="1.4.3.2" evidence="5"/>
<dbReference type="EC" id="1.4.3.25" evidence="2"/>
<dbReference type="EMBL" id="U70429">
    <property type="protein sequence ID" value="AAB51353.1"/>
    <property type="molecule type" value="mRNA"/>
</dbReference>
<dbReference type="EMBL" id="U70430">
    <property type="protein sequence ID" value="AAB51354.1"/>
    <property type="molecule type" value="Genomic_RNA"/>
</dbReference>
<dbReference type="EMBL" id="AF538041">
    <property type="protein sequence ID" value="AAM15529.1"/>
    <property type="molecule type" value="Genomic_DNA"/>
</dbReference>
<dbReference type="EMBL" id="AY442170">
    <property type="protein sequence ID" value="AAM15530.2"/>
    <property type="molecule type" value="Genomic_DNA"/>
</dbReference>
<dbReference type="EMBL" id="AY157537">
    <property type="protein sequence ID" value="AAO17038.1"/>
    <property type="molecule type" value="Genomic_DNA"/>
</dbReference>
<dbReference type="EMBL" id="AY157538">
    <property type="protein sequence ID" value="AAO17039.1"/>
    <property type="molecule type" value="mRNA"/>
</dbReference>
<dbReference type="EMBL" id="AY161348">
    <property type="protein sequence ID" value="AAO23118.1"/>
    <property type="molecule type" value="Genomic_DNA"/>
</dbReference>
<dbReference type="EMBL" id="AY178834">
    <property type="protein sequence ID" value="AAO65453.1"/>
    <property type="molecule type" value="Genomic_DNA"/>
</dbReference>
<dbReference type="EMBL" id="AY442343">
    <property type="protein sequence ID" value="AAS00457.1"/>
    <property type="molecule type" value="Genomic_DNA"/>
</dbReference>
<dbReference type="EMBL" id="AK014297">
    <property type="protein sequence ID" value="BAB29253.1"/>
    <property type="status" value="ALT_INIT"/>
    <property type="molecule type" value="mRNA"/>
</dbReference>
<dbReference type="EMBL" id="AK133082">
    <property type="protein sequence ID" value="BAE21502.1"/>
    <property type="molecule type" value="mRNA"/>
</dbReference>
<dbReference type="EMBL" id="AK150582">
    <property type="protein sequence ID" value="BAE29676.1"/>
    <property type="molecule type" value="mRNA"/>
</dbReference>
<dbReference type="EMBL" id="AK151030">
    <property type="protein sequence ID" value="BAE30047.1"/>
    <property type="molecule type" value="mRNA"/>
</dbReference>
<dbReference type="EMBL" id="AK151171">
    <property type="protein sequence ID" value="BAE30174.1"/>
    <property type="molecule type" value="mRNA"/>
</dbReference>
<dbReference type="EMBL" id="AK152538">
    <property type="protein sequence ID" value="BAE31293.1"/>
    <property type="molecule type" value="mRNA"/>
</dbReference>
<dbReference type="EMBL" id="AK172393">
    <property type="protein sequence ID" value="BAE42981.1"/>
    <property type="molecule type" value="mRNA"/>
</dbReference>
<dbReference type="EMBL" id="BC115960">
    <property type="protein sequence ID" value="AAI15961.1"/>
    <property type="molecule type" value="mRNA"/>
</dbReference>
<dbReference type="EMBL" id="U89428">
    <property type="protein sequence ID" value="AAC36534.1"/>
    <property type="molecule type" value="Transcribed_RNA"/>
</dbReference>
<dbReference type="EMBL" id="U89429">
    <property type="protein sequence ID" value="AAC36535.1"/>
    <property type="molecule type" value="mRNA"/>
</dbReference>
<dbReference type="CCDS" id="CCDS21217.1">
    <molecule id="O09046-1"/>
</dbReference>
<dbReference type="RefSeq" id="NP_001164495.1">
    <property type="nucleotide sequence ID" value="NM_001171024.1"/>
</dbReference>
<dbReference type="RefSeq" id="NP_034345.2">
    <property type="nucleotide sequence ID" value="NM_010215.3"/>
</dbReference>
<dbReference type="SMR" id="O09046"/>
<dbReference type="FunCoup" id="O09046">
    <property type="interactions" value="192"/>
</dbReference>
<dbReference type="STRING" id="10090.ENSMUSP00000113726"/>
<dbReference type="GlyCosmos" id="O09046">
    <property type="glycosylation" value="3 sites, No reported glycans"/>
</dbReference>
<dbReference type="GlyGen" id="O09046">
    <property type="glycosylation" value="4 sites, 1 O-linked glycan (1 site)"/>
</dbReference>
<dbReference type="PhosphoSitePlus" id="O09046"/>
<dbReference type="PaxDb" id="10090-ENSMUSP00000113726"/>
<dbReference type="ProteomicsDB" id="294142">
    <molecule id="O09046-1"/>
</dbReference>
<dbReference type="ProteomicsDB" id="294143">
    <molecule id="O09046-2"/>
</dbReference>
<dbReference type="DNASU" id="14204"/>
<dbReference type="GeneID" id="100328588"/>
<dbReference type="GeneID" id="14204"/>
<dbReference type="KEGG" id="mmu:100328588"/>
<dbReference type="KEGG" id="mmu:14204"/>
<dbReference type="AGR" id="MGI:109552"/>
<dbReference type="CTD" id="100328588"/>
<dbReference type="CTD" id="259307"/>
<dbReference type="MGI" id="MGI:109552">
    <property type="gene designation" value="Il4i1"/>
</dbReference>
<dbReference type="eggNOG" id="KOG0029">
    <property type="taxonomic scope" value="Eukaryota"/>
</dbReference>
<dbReference type="InParanoid" id="O09046"/>
<dbReference type="OrthoDB" id="5046242at2759"/>
<dbReference type="BRENDA" id="1.4.3.2">
    <property type="organism ID" value="3474"/>
</dbReference>
<dbReference type="Reactome" id="R-MMU-8964208">
    <property type="pathway name" value="Phenylalanine metabolism"/>
</dbReference>
<dbReference type="UniPathway" id="UPA00332"/>
<dbReference type="BioGRID-ORCS" id="100328588">
    <property type="hits" value="2 hits in 19 CRISPR screens"/>
</dbReference>
<dbReference type="BioGRID-ORCS" id="14204">
    <property type="hits" value="4 hits in 46 CRISPR screens"/>
</dbReference>
<dbReference type="PRO" id="PR:O09046"/>
<dbReference type="Proteomes" id="UP000000589">
    <property type="component" value="Unplaced"/>
</dbReference>
<dbReference type="RNAct" id="O09046">
    <property type="molecule type" value="protein"/>
</dbReference>
<dbReference type="GO" id="GO:0001669">
    <property type="term" value="C:acrosomal vesicle"/>
    <property type="evidence" value="ECO:0000250"/>
    <property type="project" value="UniProtKB"/>
</dbReference>
<dbReference type="GO" id="GO:0005576">
    <property type="term" value="C:extracellular region"/>
    <property type="evidence" value="ECO:0000250"/>
    <property type="project" value="UniProtKB"/>
</dbReference>
<dbReference type="GO" id="GO:0001772">
    <property type="term" value="C:immunological synapse"/>
    <property type="evidence" value="ECO:0000250"/>
    <property type="project" value="UniProtKB"/>
</dbReference>
<dbReference type="GO" id="GO:0005764">
    <property type="term" value="C:lysosome"/>
    <property type="evidence" value="ECO:0000314"/>
    <property type="project" value="MGI"/>
</dbReference>
<dbReference type="GO" id="GO:0097225">
    <property type="term" value="C:sperm midpiece"/>
    <property type="evidence" value="ECO:0000250"/>
    <property type="project" value="UniProtKB"/>
</dbReference>
<dbReference type="GO" id="GO:0001716">
    <property type="term" value="F:L-amino-acid oxidase activity"/>
    <property type="evidence" value="ECO:0000314"/>
    <property type="project" value="MGI"/>
</dbReference>
<dbReference type="GO" id="GO:0106329">
    <property type="term" value="F:L-phenylalaine oxidase activity"/>
    <property type="evidence" value="ECO:0007669"/>
    <property type="project" value="RHEA"/>
</dbReference>
<dbReference type="GO" id="GO:0002250">
    <property type="term" value="P:adaptive immune response"/>
    <property type="evidence" value="ECO:0007669"/>
    <property type="project" value="UniProtKB-KW"/>
</dbReference>
<dbReference type="GO" id="GO:0009072">
    <property type="term" value="P:aromatic amino acid metabolic process"/>
    <property type="evidence" value="ECO:0000314"/>
    <property type="project" value="MGI"/>
</dbReference>
<dbReference type="GO" id="GO:0006559">
    <property type="term" value="P:L-phenylalanine catabolic process"/>
    <property type="evidence" value="ECO:0000250"/>
    <property type="project" value="UniProtKB"/>
</dbReference>
<dbReference type="GO" id="GO:0006569">
    <property type="term" value="P:L-tryptophan catabolic process"/>
    <property type="evidence" value="ECO:0000250"/>
    <property type="project" value="UniProtKB"/>
</dbReference>
<dbReference type="GO" id="GO:0019440">
    <property type="term" value="P:L-tryptophan catabolic process to indole-3-acetate"/>
    <property type="evidence" value="ECO:0000250"/>
    <property type="project" value="UniProtKB"/>
</dbReference>
<dbReference type="GO" id="GO:0050868">
    <property type="term" value="P:negative regulation of T cell activation"/>
    <property type="evidence" value="ECO:0000250"/>
    <property type="project" value="UniProtKB"/>
</dbReference>
<dbReference type="GO" id="GO:0002841">
    <property type="term" value="P:negative regulation of T cell mediated immune response to tumor cell"/>
    <property type="evidence" value="ECO:0000314"/>
    <property type="project" value="UniProtKB"/>
</dbReference>
<dbReference type="GO" id="GO:0042130">
    <property type="term" value="P:negative regulation of T cell proliferation"/>
    <property type="evidence" value="ECO:0000250"/>
    <property type="project" value="UniProtKB"/>
</dbReference>
<dbReference type="GO" id="GO:0045591">
    <property type="term" value="P:positive regulation of regulatory T cell differentiation"/>
    <property type="evidence" value="ECO:0000314"/>
    <property type="project" value="UniProtKB"/>
</dbReference>
<dbReference type="GO" id="GO:0045944">
    <property type="term" value="P:positive regulation of transcription by RNA polymerase II"/>
    <property type="evidence" value="ECO:0000250"/>
    <property type="project" value="UniProtKB"/>
</dbReference>
<dbReference type="GO" id="GO:0002819">
    <property type="term" value="P:regulation of adaptive immune response"/>
    <property type="evidence" value="ECO:0000250"/>
    <property type="project" value="UniProtKB"/>
</dbReference>
<dbReference type="GO" id="GO:0045577">
    <property type="term" value="P:regulation of B cell differentiation"/>
    <property type="evidence" value="ECO:0000315"/>
    <property type="project" value="UniProtKB"/>
</dbReference>
<dbReference type="GO" id="GO:0006572">
    <property type="term" value="P:tyrosine catabolic process"/>
    <property type="evidence" value="ECO:0000250"/>
    <property type="project" value="UniProtKB"/>
</dbReference>
<dbReference type="FunFam" id="1.10.405.10:FF:000004">
    <property type="entry name" value="Amine oxidase"/>
    <property type="match status" value="1"/>
</dbReference>
<dbReference type="FunFam" id="3.50.50.60:FF:000450">
    <property type="entry name" value="Amine oxidase"/>
    <property type="match status" value="1"/>
</dbReference>
<dbReference type="FunFam" id="3.90.660.10:FF:000011">
    <property type="entry name" value="Amine oxidase"/>
    <property type="match status" value="1"/>
</dbReference>
<dbReference type="Gene3D" id="3.90.660.10">
    <property type="match status" value="2"/>
</dbReference>
<dbReference type="Gene3D" id="3.50.50.60">
    <property type="entry name" value="FAD/NAD(P)-binding domain"/>
    <property type="match status" value="1"/>
</dbReference>
<dbReference type="Gene3D" id="1.10.405.10">
    <property type="entry name" value="Guanine Nucleotide Dissociation Inhibitor, domain 1"/>
    <property type="match status" value="1"/>
</dbReference>
<dbReference type="InterPro" id="IPR002937">
    <property type="entry name" value="Amino_oxidase"/>
</dbReference>
<dbReference type="InterPro" id="IPR036188">
    <property type="entry name" value="FAD/NAD-bd_sf"/>
</dbReference>
<dbReference type="InterPro" id="IPR001613">
    <property type="entry name" value="Flavin_amine_oxidase"/>
</dbReference>
<dbReference type="InterPro" id="IPR050281">
    <property type="entry name" value="Flavin_monoamine_oxidase"/>
</dbReference>
<dbReference type="PANTHER" id="PTHR10742">
    <property type="entry name" value="FLAVIN MONOAMINE OXIDASE"/>
    <property type="match status" value="1"/>
</dbReference>
<dbReference type="PANTHER" id="PTHR10742:SF21">
    <property type="entry name" value="L-AMINO-ACID OXIDASE"/>
    <property type="match status" value="1"/>
</dbReference>
<dbReference type="Pfam" id="PF01593">
    <property type="entry name" value="Amino_oxidase"/>
    <property type="match status" value="1"/>
</dbReference>
<dbReference type="PRINTS" id="PR00757">
    <property type="entry name" value="AMINEOXDASEF"/>
</dbReference>
<dbReference type="SUPFAM" id="SSF54373">
    <property type="entry name" value="FAD-linked reductases, C-terminal domain"/>
    <property type="match status" value="1"/>
</dbReference>
<dbReference type="SUPFAM" id="SSF51905">
    <property type="entry name" value="FAD/NAD(P)-binding domain"/>
    <property type="match status" value="1"/>
</dbReference>